<sequence length="121" mass="14287">MDSNTITSFQDILQRMSKMQLESSSVDLNGMITQFERLKIYRDSLGESVMRMGDLHSLQSRNATWREELSQKFEEIRWLIAECRNILTKTENSFEQITFLQALQLLLEVESEIRTFSFQLI</sequence>
<proteinExistence type="inferred from homology"/>
<dbReference type="EMBL" id="M25370">
    <property type="protein sequence ID" value="AAA43558.1"/>
    <property type="molecule type" value="Genomic_RNA"/>
</dbReference>
<dbReference type="PIR" id="H32663">
    <property type="entry name" value="MNIVB8"/>
</dbReference>
<dbReference type="SMR" id="P69262"/>
<dbReference type="GO" id="GO:0042025">
    <property type="term" value="C:host cell nucleus"/>
    <property type="evidence" value="ECO:0007669"/>
    <property type="project" value="UniProtKB-SubCell"/>
</dbReference>
<dbReference type="GO" id="GO:0044423">
    <property type="term" value="C:virion component"/>
    <property type="evidence" value="ECO:0007669"/>
    <property type="project" value="UniProtKB-UniRule"/>
</dbReference>
<dbReference type="GO" id="GO:0039675">
    <property type="term" value="P:exit of virus from host cell nucleus through nuclear pore"/>
    <property type="evidence" value="ECO:0007669"/>
    <property type="project" value="UniProtKB-UniRule"/>
</dbReference>
<dbReference type="Gene3D" id="1.10.287.230">
    <property type="match status" value="1"/>
</dbReference>
<dbReference type="HAMAP" id="MF_04067">
    <property type="entry name" value="INFV_NEP"/>
    <property type="match status" value="1"/>
</dbReference>
<dbReference type="InterPro" id="IPR000968">
    <property type="entry name" value="Flu_NS2"/>
</dbReference>
<dbReference type="Pfam" id="PF00601">
    <property type="entry name" value="Flu_NS2"/>
    <property type="match status" value="1"/>
</dbReference>
<dbReference type="SUPFAM" id="SSF101156">
    <property type="entry name" value="Nonstructural protein ns2, Nep, M1-binding domain"/>
    <property type="match status" value="1"/>
</dbReference>
<comment type="function">
    <text evidence="1">Mediates the nuclear export of encapsidated genomic RNAs (ribonucleoproteins, RNPs). Acts as an adapter between viral RNPs complexes and the nuclear export machinery of the cell. Possesses no intrinsic RNA-binding activity, but includes a C-terminal M1-binding domain. This domain is believed to allow recognition of RNPs bound to the protein M1. Since protein M1 is not available in large quantities before late stages of infection, such an indirect recognition mechanism probably ensures that genomic RNPs are not exported from the host nucleus until sufficient quantities of viral mRNA and progeny genomic RNA have been synthesized. Furthermore, the RNPs enter the host cytoplasm only when associated with the M1 protein that is necessary to guide them to the plasma membrane. May down-regulate viral RNA synthesis when overproduced.</text>
</comment>
<comment type="subunit">
    <text evidence="1">Interacts with protein M1. May interact with host nucleoporin RAB/HRB and exportin XPO1/CRM1.</text>
</comment>
<comment type="subcellular location">
    <subcellularLocation>
        <location evidence="1">Virion</location>
    </subcellularLocation>
    <subcellularLocation>
        <location evidence="1">Host nucleus</location>
    </subcellularLocation>
</comment>
<comment type="alternative products">
    <event type="alternative splicing"/>
    <isoform>
        <id>P69262-1</id>
        <name>NEP</name>
        <name>NS2</name>
        <sequence type="displayed"/>
    </isoform>
    <isoform>
        <id>P13143-1</id>
        <name>NS1</name>
        <sequence type="external"/>
    </isoform>
</comment>
<comment type="miscellaneous">
    <text>Average number present in a viral particle is estimated to be 130-200 molecules.</text>
</comment>
<comment type="similarity">
    <text evidence="1">Belongs to the influenza viruses NEP family.</text>
</comment>
<name>NEP_I79A3</name>
<protein>
    <recommendedName>
        <fullName evidence="1">Nuclear export protein</fullName>
        <shortName evidence="1">NEP</shortName>
    </recommendedName>
    <alternativeName>
        <fullName evidence="1">Non-structural protein 2</fullName>
        <shortName evidence="1">NS2</shortName>
    </alternativeName>
</protein>
<accession>P69262</accession>
<accession>P03510</accession>
<accession>P13151</accession>
<keyword id="KW-0025">Alternative splicing</keyword>
<keyword id="KW-1048">Host nucleus</keyword>
<keyword id="KW-0945">Host-virus interaction</keyword>
<keyword id="KW-0813">Transport</keyword>
<keyword id="KW-0946">Virion</keyword>
<reference key="1">
    <citation type="journal article" date="1989" name="Virology">
        <title>The B allele of the NS gene of avian influenza viruses, but not the A allele, attenuates a human influenza A virus for squirrel monkeys.</title>
        <authorList>
            <person name="Treanor J.J."/>
            <person name="Snyder M.H."/>
            <person name="London W.T."/>
            <person name="Murphy B.R."/>
        </authorList>
    </citation>
    <scope>NUCLEOTIDE SEQUENCE [GENOMIC RNA]</scope>
</reference>
<organismHost>
    <name type="scientific">Aves</name>
    <dbReference type="NCBI Taxonomy" id="8782"/>
</organismHost>
<gene>
    <name evidence="1" type="primary">NS</name>
</gene>
<evidence type="ECO:0000255" key="1">
    <source>
        <dbReference type="HAMAP-Rule" id="MF_04067"/>
    </source>
</evidence>
<organism>
    <name type="scientific">Influenza A virus (strain A/Pintail/Alberta/358/1979 H3N6)</name>
    <dbReference type="NCBI Taxonomy" id="11452"/>
    <lineage>
        <taxon>Viruses</taxon>
        <taxon>Riboviria</taxon>
        <taxon>Orthornavirae</taxon>
        <taxon>Negarnaviricota</taxon>
        <taxon>Polyploviricotina</taxon>
        <taxon>Insthoviricetes</taxon>
        <taxon>Articulavirales</taxon>
        <taxon>Orthomyxoviridae</taxon>
        <taxon>Alphainfluenzavirus</taxon>
        <taxon>Alphainfluenzavirus influenzae</taxon>
        <taxon>Influenza A virus</taxon>
    </lineage>
</organism>
<feature type="chain" id="PRO_0000079004" description="Nuclear export protein">
    <location>
        <begin position="1"/>
        <end position="121"/>
    </location>
</feature>
<feature type="short sequence motif" description="Nuclear export signal" evidence="1">
    <location>
        <begin position="12"/>
        <end position="21"/>
    </location>
</feature>
<feature type="short sequence motif" description="Nuclear export signal" evidence="1">
    <location>
        <begin position="85"/>
        <end position="94"/>
    </location>
</feature>